<reference key="1">
    <citation type="submission" date="2006-03" db="EMBL/GenBank/DDBJ databases">
        <title>Complete sequence of chromosome of Nitrobacter hamburgensis X14.</title>
        <authorList>
            <consortium name="US DOE Joint Genome Institute"/>
            <person name="Copeland A."/>
            <person name="Lucas S."/>
            <person name="Lapidus A."/>
            <person name="Barry K."/>
            <person name="Detter J.C."/>
            <person name="Glavina del Rio T."/>
            <person name="Hammon N."/>
            <person name="Israni S."/>
            <person name="Dalin E."/>
            <person name="Tice H."/>
            <person name="Pitluck S."/>
            <person name="Chain P."/>
            <person name="Malfatti S."/>
            <person name="Shin M."/>
            <person name="Vergez L."/>
            <person name="Schmutz J."/>
            <person name="Larimer F."/>
            <person name="Land M."/>
            <person name="Hauser L."/>
            <person name="Kyrpides N."/>
            <person name="Ivanova N."/>
            <person name="Ward B."/>
            <person name="Arp D."/>
            <person name="Klotz M."/>
            <person name="Stein L."/>
            <person name="O'Mullan G."/>
            <person name="Starkenburg S."/>
            <person name="Sayavedra L."/>
            <person name="Poret-Peterson A.T."/>
            <person name="Gentry M.E."/>
            <person name="Bruce D."/>
            <person name="Richardson P."/>
        </authorList>
    </citation>
    <scope>NUCLEOTIDE SEQUENCE [LARGE SCALE GENOMIC DNA]</scope>
    <source>
        <strain>DSM 10229 / NCIMB 13809 / X14</strain>
    </source>
</reference>
<name>SYS_NITHX</name>
<organism>
    <name type="scientific">Nitrobacter hamburgensis (strain DSM 10229 / NCIMB 13809 / X14)</name>
    <dbReference type="NCBI Taxonomy" id="323097"/>
    <lineage>
        <taxon>Bacteria</taxon>
        <taxon>Pseudomonadati</taxon>
        <taxon>Pseudomonadota</taxon>
        <taxon>Alphaproteobacteria</taxon>
        <taxon>Hyphomicrobiales</taxon>
        <taxon>Nitrobacteraceae</taxon>
        <taxon>Nitrobacter</taxon>
    </lineage>
</organism>
<sequence>MHDIKAIRDNPAAFDAALKRRGLAPLSSSLLAIDEKRRAAILASEQAQARRNAASKEIGEAKKAKDEARAAKLMAEVAELKTSMPEMDAAAKAADEKLRKALAEIPNLPLDEVPDGTDEHGNIQHHVFGKKRDYAFTPKPHEDLGGALGDMDFEAAAKLSGARFVVLKRGLARLERAIGQFFLDVHTGEHGYTEVNPPLLVRDDAMFGTAQLPKFAEDQFDFIKDRTISEQLEQTVVEIDQRKVRPGHFDMEQKVTPLSAPTRKDRLWLIPTAEVPLTNLVRESILDEKELPLRFTALTPCFRAEAGAAGRDTRGMIRQHQFTKVELVSITTPETSKDEHERMLSCAEEVLRRLDLHYRVMTLCTGDMGFASQKTYDIEVWMPGQGEGGAYREISSCSVCGDFQARRMDARSRGPDGKPRFVHTLNGSGTAVGRALIAVMETYQQADGSIAVPDVLLPYMGGLKVIAKGL</sequence>
<feature type="chain" id="PRO_1000019748" description="Serine--tRNA ligase">
    <location>
        <begin position="1"/>
        <end position="470"/>
    </location>
</feature>
<feature type="binding site" evidence="1">
    <location>
        <begin position="272"/>
        <end position="274"/>
    </location>
    <ligand>
        <name>L-serine</name>
        <dbReference type="ChEBI" id="CHEBI:33384"/>
    </ligand>
</feature>
<feature type="binding site" evidence="1">
    <location>
        <begin position="303"/>
        <end position="305"/>
    </location>
    <ligand>
        <name>ATP</name>
        <dbReference type="ChEBI" id="CHEBI:30616"/>
    </ligand>
</feature>
<feature type="binding site" evidence="1">
    <location>
        <position position="326"/>
    </location>
    <ligand>
        <name>L-serine</name>
        <dbReference type="ChEBI" id="CHEBI:33384"/>
    </ligand>
</feature>
<feature type="binding site" evidence="1">
    <location>
        <begin position="393"/>
        <end position="396"/>
    </location>
    <ligand>
        <name>ATP</name>
        <dbReference type="ChEBI" id="CHEBI:30616"/>
    </ligand>
</feature>
<feature type="binding site" evidence="1">
    <location>
        <position position="428"/>
    </location>
    <ligand>
        <name>L-serine</name>
        <dbReference type="ChEBI" id="CHEBI:33384"/>
    </ligand>
</feature>
<accession>Q1QME2</accession>
<keyword id="KW-0030">Aminoacyl-tRNA synthetase</keyword>
<keyword id="KW-0067">ATP-binding</keyword>
<keyword id="KW-0963">Cytoplasm</keyword>
<keyword id="KW-0436">Ligase</keyword>
<keyword id="KW-0547">Nucleotide-binding</keyword>
<keyword id="KW-0648">Protein biosynthesis</keyword>
<keyword id="KW-1185">Reference proteome</keyword>
<proteinExistence type="inferred from homology"/>
<gene>
    <name evidence="1" type="primary">serS</name>
    <name type="ordered locus">Nham_1791</name>
</gene>
<dbReference type="EC" id="6.1.1.11" evidence="1"/>
<dbReference type="EMBL" id="CP000319">
    <property type="protein sequence ID" value="ABE62605.1"/>
    <property type="molecule type" value="Genomic_DNA"/>
</dbReference>
<dbReference type="RefSeq" id="WP_011510287.1">
    <property type="nucleotide sequence ID" value="NC_007964.1"/>
</dbReference>
<dbReference type="SMR" id="Q1QME2"/>
<dbReference type="STRING" id="323097.Nham_1791"/>
<dbReference type="KEGG" id="nha:Nham_1791"/>
<dbReference type="eggNOG" id="COG0172">
    <property type="taxonomic scope" value="Bacteria"/>
</dbReference>
<dbReference type="HOGENOM" id="CLU_023797_1_1_5"/>
<dbReference type="OrthoDB" id="9804647at2"/>
<dbReference type="UniPathway" id="UPA00906">
    <property type="reaction ID" value="UER00895"/>
</dbReference>
<dbReference type="Proteomes" id="UP000001953">
    <property type="component" value="Chromosome"/>
</dbReference>
<dbReference type="GO" id="GO:0005737">
    <property type="term" value="C:cytoplasm"/>
    <property type="evidence" value="ECO:0007669"/>
    <property type="project" value="UniProtKB-SubCell"/>
</dbReference>
<dbReference type="GO" id="GO:0005524">
    <property type="term" value="F:ATP binding"/>
    <property type="evidence" value="ECO:0007669"/>
    <property type="project" value="UniProtKB-UniRule"/>
</dbReference>
<dbReference type="GO" id="GO:0004828">
    <property type="term" value="F:serine-tRNA ligase activity"/>
    <property type="evidence" value="ECO:0007669"/>
    <property type="project" value="UniProtKB-UniRule"/>
</dbReference>
<dbReference type="GO" id="GO:0016260">
    <property type="term" value="P:selenocysteine biosynthetic process"/>
    <property type="evidence" value="ECO:0007669"/>
    <property type="project" value="UniProtKB-UniRule"/>
</dbReference>
<dbReference type="GO" id="GO:0006434">
    <property type="term" value="P:seryl-tRNA aminoacylation"/>
    <property type="evidence" value="ECO:0007669"/>
    <property type="project" value="UniProtKB-UniRule"/>
</dbReference>
<dbReference type="CDD" id="cd00770">
    <property type="entry name" value="SerRS_core"/>
    <property type="match status" value="1"/>
</dbReference>
<dbReference type="Gene3D" id="3.30.930.10">
    <property type="entry name" value="Bira Bifunctional Protein, Domain 2"/>
    <property type="match status" value="1"/>
</dbReference>
<dbReference type="Gene3D" id="1.10.287.40">
    <property type="entry name" value="Serine-tRNA synthetase, tRNA binding domain"/>
    <property type="match status" value="1"/>
</dbReference>
<dbReference type="HAMAP" id="MF_00176">
    <property type="entry name" value="Ser_tRNA_synth_type1"/>
    <property type="match status" value="1"/>
</dbReference>
<dbReference type="InterPro" id="IPR002314">
    <property type="entry name" value="aa-tRNA-synt_IIb"/>
</dbReference>
<dbReference type="InterPro" id="IPR006195">
    <property type="entry name" value="aa-tRNA-synth_II"/>
</dbReference>
<dbReference type="InterPro" id="IPR045864">
    <property type="entry name" value="aa-tRNA-synth_II/BPL/LPL"/>
</dbReference>
<dbReference type="InterPro" id="IPR002317">
    <property type="entry name" value="Ser-tRNA-ligase_type_1"/>
</dbReference>
<dbReference type="InterPro" id="IPR015866">
    <property type="entry name" value="Ser-tRNA-synth_1_N"/>
</dbReference>
<dbReference type="InterPro" id="IPR042103">
    <property type="entry name" value="SerRS_1_N_sf"/>
</dbReference>
<dbReference type="InterPro" id="IPR033729">
    <property type="entry name" value="SerRS_core"/>
</dbReference>
<dbReference type="InterPro" id="IPR010978">
    <property type="entry name" value="tRNA-bd_arm"/>
</dbReference>
<dbReference type="NCBIfam" id="TIGR00414">
    <property type="entry name" value="serS"/>
    <property type="match status" value="1"/>
</dbReference>
<dbReference type="PANTHER" id="PTHR43697:SF1">
    <property type="entry name" value="SERINE--TRNA LIGASE"/>
    <property type="match status" value="1"/>
</dbReference>
<dbReference type="PANTHER" id="PTHR43697">
    <property type="entry name" value="SERYL-TRNA SYNTHETASE"/>
    <property type="match status" value="1"/>
</dbReference>
<dbReference type="Pfam" id="PF02403">
    <property type="entry name" value="Seryl_tRNA_N"/>
    <property type="match status" value="1"/>
</dbReference>
<dbReference type="Pfam" id="PF00587">
    <property type="entry name" value="tRNA-synt_2b"/>
    <property type="match status" value="1"/>
</dbReference>
<dbReference type="PIRSF" id="PIRSF001529">
    <property type="entry name" value="Ser-tRNA-synth_IIa"/>
    <property type="match status" value="1"/>
</dbReference>
<dbReference type="PRINTS" id="PR00981">
    <property type="entry name" value="TRNASYNTHSER"/>
</dbReference>
<dbReference type="SUPFAM" id="SSF55681">
    <property type="entry name" value="Class II aaRS and biotin synthetases"/>
    <property type="match status" value="1"/>
</dbReference>
<dbReference type="SUPFAM" id="SSF46589">
    <property type="entry name" value="tRNA-binding arm"/>
    <property type="match status" value="1"/>
</dbReference>
<dbReference type="PROSITE" id="PS50862">
    <property type="entry name" value="AA_TRNA_LIGASE_II"/>
    <property type="match status" value="1"/>
</dbReference>
<comment type="function">
    <text evidence="1">Catalyzes the attachment of serine to tRNA(Ser). Is also able to aminoacylate tRNA(Sec) with serine, to form the misacylated tRNA L-seryl-tRNA(Sec), which will be further converted into selenocysteinyl-tRNA(Sec).</text>
</comment>
<comment type="catalytic activity">
    <reaction evidence="1">
        <text>tRNA(Ser) + L-serine + ATP = L-seryl-tRNA(Ser) + AMP + diphosphate + H(+)</text>
        <dbReference type="Rhea" id="RHEA:12292"/>
        <dbReference type="Rhea" id="RHEA-COMP:9669"/>
        <dbReference type="Rhea" id="RHEA-COMP:9703"/>
        <dbReference type="ChEBI" id="CHEBI:15378"/>
        <dbReference type="ChEBI" id="CHEBI:30616"/>
        <dbReference type="ChEBI" id="CHEBI:33019"/>
        <dbReference type="ChEBI" id="CHEBI:33384"/>
        <dbReference type="ChEBI" id="CHEBI:78442"/>
        <dbReference type="ChEBI" id="CHEBI:78533"/>
        <dbReference type="ChEBI" id="CHEBI:456215"/>
        <dbReference type="EC" id="6.1.1.11"/>
    </reaction>
</comment>
<comment type="catalytic activity">
    <reaction evidence="1">
        <text>tRNA(Sec) + L-serine + ATP = L-seryl-tRNA(Sec) + AMP + diphosphate + H(+)</text>
        <dbReference type="Rhea" id="RHEA:42580"/>
        <dbReference type="Rhea" id="RHEA-COMP:9742"/>
        <dbReference type="Rhea" id="RHEA-COMP:10128"/>
        <dbReference type="ChEBI" id="CHEBI:15378"/>
        <dbReference type="ChEBI" id="CHEBI:30616"/>
        <dbReference type="ChEBI" id="CHEBI:33019"/>
        <dbReference type="ChEBI" id="CHEBI:33384"/>
        <dbReference type="ChEBI" id="CHEBI:78442"/>
        <dbReference type="ChEBI" id="CHEBI:78533"/>
        <dbReference type="ChEBI" id="CHEBI:456215"/>
        <dbReference type="EC" id="6.1.1.11"/>
    </reaction>
</comment>
<comment type="pathway">
    <text evidence="1">Aminoacyl-tRNA biosynthesis; selenocysteinyl-tRNA(Sec) biosynthesis; L-seryl-tRNA(Sec) from L-serine and tRNA(Sec): step 1/1.</text>
</comment>
<comment type="subunit">
    <text evidence="1">Homodimer. The tRNA molecule binds across the dimer.</text>
</comment>
<comment type="subcellular location">
    <subcellularLocation>
        <location evidence="1">Cytoplasm</location>
    </subcellularLocation>
</comment>
<comment type="domain">
    <text evidence="1">Consists of two distinct domains, a catalytic core and a N-terminal extension that is involved in tRNA binding.</text>
</comment>
<comment type="similarity">
    <text evidence="1">Belongs to the class-II aminoacyl-tRNA synthetase family. Type-1 seryl-tRNA synthetase subfamily.</text>
</comment>
<protein>
    <recommendedName>
        <fullName evidence="1">Serine--tRNA ligase</fullName>
        <ecNumber evidence="1">6.1.1.11</ecNumber>
    </recommendedName>
    <alternativeName>
        <fullName evidence="1">Seryl-tRNA synthetase</fullName>
        <shortName evidence="1">SerRS</shortName>
    </alternativeName>
    <alternativeName>
        <fullName evidence="1">Seryl-tRNA(Ser/Sec) synthetase</fullName>
    </alternativeName>
</protein>
<evidence type="ECO:0000255" key="1">
    <source>
        <dbReference type="HAMAP-Rule" id="MF_00176"/>
    </source>
</evidence>